<protein>
    <recommendedName>
        <fullName evidence="1">Ion-translocating oxidoreductase complex subunit G</fullName>
        <ecNumber evidence="1">7.-.-.-</ecNumber>
    </recommendedName>
    <alternativeName>
        <fullName evidence="1">Rnf electron transport complex subunit G</fullName>
    </alternativeName>
</protein>
<comment type="function">
    <text evidence="1">Part of a membrane-bound complex that couples electron transfer with translocation of ions across the membrane.</text>
</comment>
<comment type="cofactor">
    <cofactor evidence="1">
        <name>FMN</name>
        <dbReference type="ChEBI" id="CHEBI:58210"/>
    </cofactor>
</comment>
<comment type="subunit">
    <text evidence="1">The complex is composed of six subunits: RnfA, RnfB, RnfC, RnfD, RnfE and RnfG.</text>
</comment>
<comment type="subcellular location">
    <subcellularLocation>
        <location evidence="1">Cell inner membrane</location>
        <topology evidence="1">Single-pass membrane protein</topology>
    </subcellularLocation>
</comment>
<comment type="similarity">
    <text evidence="1">Belongs to the RnfG family.</text>
</comment>
<gene>
    <name evidence="1" type="primary">rnfG</name>
    <name type="ordered locus">VV1188</name>
</gene>
<feature type="chain" id="PRO_0000214644" description="Ion-translocating oxidoreductase complex subunit G">
    <location>
        <begin position="1"/>
        <end position="211"/>
    </location>
</feature>
<feature type="transmembrane region" description="Helical" evidence="1">
    <location>
        <begin position="9"/>
        <end position="29"/>
    </location>
</feature>
<feature type="modified residue" description="FMN phosphoryl threonine" evidence="1">
    <location>
        <position position="175"/>
    </location>
</feature>
<name>RNFG_VIBVY</name>
<accession>Q7MM85</accession>
<evidence type="ECO:0000255" key="1">
    <source>
        <dbReference type="HAMAP-Rule" id="MF_00479"/>
    </source>
</evidence>
<keyword id="KW-0997">Cell inner membrane</keyword>
<keyword id="KW-1003">Cell membrane</keyword>
<keyword id="KW-0249">Electron transport</keyword>
<keyword id="KW-0285">Flavoprotein</keyword>
<keyword id="KW-0288">FMN</keyword>
<keyword id="KW-0472">Membrane</keyword>
<keyword id="KW-0597">Phosphoprotein</keyword>
<keyword id="KW-1278">Translocase</keyword>
<keyword id="KW-0812">Transmembrane</keyword>
<keyword id="KW-1133">Transmembrane helix</keyword>
<keyword id="KW-0813">Transport</keyword>
<dbReference type="EC" id="7.-.-.-" evidence="1"/>
<dbReference type="EMBL" id="BA000037">
    <property type="protein sequence ID" value="BAC93952.1"/>
    <property type="molecule type" value="Genomic_DNA"/>
</dbReference>
<dbReference type="RefSeq" id="WP_011149907.1">
    <property type="nucleotide sequence ID" value="NC_005139.1"/>
</dbReference>
<dbReference type="SMR" id="Q7MM85"/>
<dbReference type="STRING" id="672.VV93_v1c11080"/>
<dbReference type="KEGG" id="vvy:VV1188"/>
<dbReference type="PATRIC" id="fig|196600.6.peg.1181"/>
<dbReference type="eggNOG" id="COG4659">
    <property type="taxonomic scope" value="Bacteria"/>
</dbReference>
<dbReference type="HOGENOM" id="CLU_077882_1_0_6"/>
<dbReference type="Proteomes" id="UP000002675">
    <property type="component" value="Chromosome I"/>
</dbReference>
<dbReference type="GO" id="GO:0005886">
    <property type="term" value="C:plasma membrane"/>
    <property type="evidence" value="ECO:0007669"/>
    <property type="project" value="UniProtKB-SubCell"/>
</dbReference>
<dbReference type="GO" id="GO:0009055">
    <property type="term" value="F:electron transfer activity"/>
    <property type="evidence" value="ECO:0007669"/>
    <property type="project" value="InterPro"/>
</dbReference>
<dbReference type="GO" id="GO:0010181">
    <property type="term" value="F:FMN binding"/>
    <property type="evidence" value="ECO:0007669"/>
    <property type="project" value="InterPro"/>
</dbReference>
<dbReference type="GO" id="GO:0022900">
    <property type="term" value="P:electron transport chain"/>
    <property type="evidence" value="ECO:0007669"/>
    <property type="project" value="UniProtKB-UniRule"/>
</dbReference>
<dbReference type="HAMAP" id="MF_00479">
    <property type="entry name" value="RsxG_RnfG"/>
    <property type="match status" value="1"/>
</dbReference>
<dbReference type="InterPro" id="IPR007329">
    <property type="entry name" value="FMN-bd"/>
</dbReference>
<dbReference type="InterPro" id="IPR010209">
    <property type="entry name" value="Ion_transpt_RnfG/RsxG"/>
</dbReference>
<dbReference type="NCBIfam" id="NF002519">
    <property type="entry name" value="PRK01908.1"/>
    <property type="match status" value="1"/>
</dbReference>
<dbReference type="NCBIfam" id="TIGR01947">
    <property type="entry name" value="rnfG"/>
    <property type="match status" value="1"/>
</dbReference>
<dbReference type="PANTHER" id="PTHR36118">
    <property type="entry name" value="ION-TRANSLOCATING OXIDOREDUCTASE COMPLEX SUBUNIT G"/>
    <property type="match status" value="1"/>
</dbReference>
<dbReference type="PANTHER" id="PTHR36118:SF1">
    <property type="entry name" value="ION-TRANSLOCATING OXIDOREDUCTASE COMPLEX SUBUNIT G"/>
    <property type="match status" value="1"/>
</dbReference>
<dbReference type="Pfam" id="PF04205">
    <property type="entry name" value="FMN_bind"/>
    <property type="match status" value="1"/>
</dbReference>
<dbReference type="PIRSF" id="PIRSF006091">
    <property type="entry name" value="E_trnsport_RnfG"/>
    <property type="match status" value="1"/>
</dbReference>
<dbReference type="SMART" id="SM00900">
    <property type="entry name" value="FMN_bind"/>
    <property type="match status" value="1"/>
</dbReference>
<sequence>MLNAIRKNGLTLAIFACATTGLVAMTQYLTKDQITLQEQKQLSSVLNQVIPESAHDNLLFESCTLVSDSALGSDKAMPAYIATRNGQATAIAIESVAPDGYNGAIKIITGIDTSGTVLGTRVLSHQETPGLGDKIDLRVTDWITSFTGKQLNDGNYNSWKVRKDGGEFDQFTGATITPRAVVKAVRNTVEFVNTHREQILNQPLNCGGHYE</sequence>
<reference key="1">
    <citation type="journal article" date="2003" name="Genome Res.">
        <title>Comparative genome analysis of Vibrio vulnificus, a marine pathogen.</title>
        <authorList>
            <person name="Chen C.-Y."/>
            <person name="Wu K.-M."/>
            <person name="Chang Y.-C."/>
            <person name="Chang C.-H."/>
            <person name="Tsai H.-C."/>
            <person name="Liao T.-L."/>
            <person name="Liu Y.-M."/>
            <person name="Chen H.-J."/>
            <person name="Shen A.B.-T."/>
            <person name="Li J.-C."/>
            <person name="Su T.-L."/>
            <person name="Shao C.-P."/>
            <person name="Lee C.-T."/>
            <person name="Hor L.-I."/>
            <person name="Tsai S.-F."/>
        </authorList>
    </citation>
    <scope>NUCLEOTIDE SEQUENCE [LARGE SCALE GENOMIC DNA]</scope>
    <source>
        <strain>YJ016</strain>
    </source>
</reference>
<proteinExistence type="inferred from homology"/>
<organism>
    <name type="scientific">Vibrio vulnificus (strain YJ016)</name>
    <dbReference type="NCBI Taxonomy" id="196600"/>
    <lineage>
        <taxon>Bacteria</taxon>
        <taxon>Pseudomonadati</taxon>
        <taxon>Pseudomonadota</taxon>
        <taxon>Gammaproteobacteria</taxon>
        <taxon>Vibrionales</taxon>
        <taxon>Vibrionaceae</taxon>
        <taxon>Vibrio</taxon>
    </lineage>
</organism>